<proteinExistence type="evidence at transcript level"/>
<dbReference type="EMBL" id="U12585">
    <property type="protein sequence ID" value="AAA65702.1"/>
    <property type="status" value="ALT_FRAME"/>
    <property type="molecule type" value="mRNA"/>
</dbReference>
<dbReference type="PIR" id="A55021">
    <property type="entry name" value="A55021"/>
</dbReference>
<dbReference type="Proteomes" id="UP000189706">
    <property type="component" value="Unplaced"/>
</dbReference>
<dbReference type="GO" id="GO:0000785">
    <property type="term" value="C:chromatin"/>
    <property type="evidence" value="ECO:0007669"/>
    <property type="project" value="TreeGrafter"/>
</dbReference>
<dbReference type="GO" id="GO:0005634">
    <property type="term" value="C:nucleus"/>
    <property type="evidence" value="ECO:0007669"/>
    <property type="project" value="UniProtKB-SubCell"/>
</dbReference>
<dbReference type="GO" id="GO:0005667">
    <property type="term" value="C:transcription regulator complex"/>
    <property type="evidence" value="ECO:0007669"/>
    <property type="project" value="TreeGrafter"/>
</dbReference>
<dbReference type="GO" id="GO:0000981">
    <property type="term" value="F:DNA-binding transcription factor activity, RNA polymerase II-specific"/>
    <property type="evidence" value="ECO:0007669"/>
    <property type="project" value="TreeGrafter"/>
</dbReference>
<dbReference type="GO" id="GO:0070888">
    <property type="term" value="F:E-box binding"/>
    <property type="evidence" value="ECO:0000250"/>
    <property type="project" value="UniProtKB"/>
</dbReference>
<dbReference type="GO" id="GO:0046982">
    <property type="term" value="F:protein heterodimerization activity"/>
    <property type="evidence" value="ECO:0000250"/>
    <property type="project" value="UniProtKB"/>
</dbReference>
<dbReference type="GO" id="GO:0030154">
    <property type="term" value="P:cell differentiation"/>
    <property type="evidence" value="ECO:0007669"/>
    <property type="project" value="UniProtKB-KW"/>
</dbReference>
<dbReference type="GO" id="GO:0007399">
    <property type="term" value="P:nervous system development"/>
    <property type="evidence" value="ECO:0007669"/>
    <property type="project" value="UniProtKB-KW"/>
</dbReference>
<dbReference type="GO" id="GO:0045893">
    <property type="term" value="P:positive regulation of DNA-templated transcription"/>
    <property type="evidence" value="ECO:0007669"/>
    <property type="project" value="UniProtKB-ARBA"/>
</dbReference>
<dbReference type="GO" id="GO:0045666">
    <property type="term" value="P:positive regulation of neuron differentiation"/>
    <property type="evidence" value="ECO:0000250"/>
    <property type="project" value="UniProtKB"/>
</dbReference>
<dbReference type="GO" id="GO:0097210">
    <property type="term" value="P:response to gonadotropin-releasing hormone"/>
    <property type="evidence" value="ECO:0000250"/>
    <property type="project" value="UniProtKB"/>
</dbReference>
<dbReference type="CDD" id="cd18945">
    <property type="entry name" value="bHLH_E-protein_TCF4_E2-2"/>
    <property type="match status" value="1"/>
</dbReference>
<dbReference type="FunFam" id="4.10.280.10:FF:000001">
    <property type="entry name" value="Putative transcription factor 12"/>
    <property type="match status" value="1"/>
</dbReference>
<dbReference type="Gene3D" id="4.10.280.10">
    <property type="entry name" value="Helix-loop-helix DNA-binding domain"/>
    <property type="match status" value="1"/>
</dbReference>
<dbReference type="InterPro" id="IPR011598">
    <property type="entry name" value="bHLH_dom"/>
</dbReference>
<dbReference type="InterPro" id="IPR036638">
    <property type="entry name" value="HLH_DNA-bd_sf"/>
</dbReference>
<dbReference type="InterPro" id="IPR051098">
    <property type="entry name" value="NeuroDiff_E-box_TFs"/>
</dbReference>
<dbReference type="PANTHER" id="PTHR11793">
    <property type="entry name" value="BASIC HELIX-LOOP-HELIX TRANSCRIPTION FACTOR"/>
    <property type="match status" value="1"/>
</dbReference>
<dbReference type="PANTHER" id="PTHR11793:SF11">
    <property type="entry name" value="TRANSCRIPTION FACTOR 12"/>
    <property type="match status" value="1"/>
</dbReference>
<dbReference type="Pfam" id="PF00010">
    <property type="entry name" value="HLH"/>
    <property type="match status" value="1"/>
</dbReference>
<dbReference type="SMART" id="SM00353">
    <property type="entry name" value="HLH"/>
    <property type="match status" value="1"/>
</dbReference>
<dbReference type="SUPFAM" id="SSF47459">
    <property type="entry name" value="HLH, helix-loop-helix DNA-binding domain"/>
    <property type="match status" value="1"/>
</dbReference>
<dbReference type="PROSITE" id="PS50888">
    <property type="entry name" value="BHLH"/>
    <property type="match status" value="1"/>
</dbReference>
<feature type="chain" id="PRO_0000127229" description="Transcription factor 12">
    <location>
        <begin position="1" status="less than"/>
        <end position="437"/>
    </location>
</feature>
<feature type="domain" description="bHLH" evidence="3">
    <location>
        <begin position="332"/>
        <end position="385"/>
    </location>
</feature>
<feature type="region of interest" description="Disordered" evidence="4">
    <location>
        <begin position="1"/>
        <end position="68"/>
    </location>
</feature>
<feature type="region of interest" description="Disordered" evidence="4">
    <location>
        <begin position="80"/>
        <end position="123"/>
    </location>
</feature>
<feature type="region of interest" description="Disordered" evidence="4">
    <location>
        <begin position="244"/>
        <end position="335"/>
    </location>
</feature>
<feature type="region of interest" description="Class A specific domain">
    <location>
        <begin position="387"/>
        <end position="410"/>
    </location>
</feature>
<feature type="region of interest" description="Disordered" evidence="4">
    <location>
        <begin position="405"/>
        <end position="437"/>
    </location>
</feature>
<feature type="compositionally biased region" description="Polar residues" evidence="4">
    <location>
        <begin position="13"/>
        <end position="37"/>
    </location>
</feature>
<feature type="compositionally biased region" description="Low complexity" evidence="4">
    <location>
        <begin position="83"/>
        <end position="94"/>
    </location>
</feature>
<feature type="compositionally biased region" description="Polar residues" evidence="4">
    <location>
        <begin position="95"/>
        <end position="107"/>
    </location>
</feature>
<feature type="compositionally biased region" description="Polar residues" evidence="4">
    <location>
        <begin position="114"/>
        <end position="123"/>
    </location>
</feature>
<feature type="compositionally biased region" description="Basic and acidic residues" evidence="4">
    <location>
        <begin position="273"/>
        <end position="285"/>
    </location>
</feature>
<feature type="compositionally biased region" description="Basic and acidic residues" evidence="4">
    <location>
        <begin position="291"/>
        <end position="306"/>
    </location>
</feature>
<feature type="compositionally biased region" description="Basic and acidic residues" evidence="4">
    <location>
        <begin position="323"/>
        <end position="335"/>
    </location>
</feature>
<feature type="compositionally biased region" description="Low complexity" evidence="4">
    <location>
        <begin position="416"/>
        <end position="427"/>
    </location>
</feature>
<feature type="compositionally biased region" description="Polar residues" evidence="4">
    <location>
        <begin position="428"/>
        <end position="437"/>
    </location>
</feature>
<feature type="modified residue" description="Phosphothreonine" evidence="2">
    <location>
        <position position="44"/>
    </location>
</feature>
<feature type="modified residue" description="Phosphoserine" evidence="2">
    <location>
        <position position="64"/>
    </location>
</feature>
<feature type="modified residue" description="Phosphoserine" evidence="2">
    <location>
        <position position="295"/>
    </location>
</feature>
<feature type="modified residue" description="Phosphothreonine" evidence="2">
    <location>
        <position position="312"/>
    </location>
</feature>
<feature type="modified residue" description="Phosphoserine" evidence="2">
    <location>
        <position position="313"/>
    </location>
</feature>
<feature type="modified residue" description="Phosphoserine" evidence="2">
    <location>
        <position position="314"/>
    </location>
</feature>
<feature type="cross-link" description="Glycyl lysine isopeptide (Lys-Gly) (interchain with G-Cter in SUMO2)" evidence="2">
    <location>
        <position position="274"/>
    </location>
</feature>
<feature type="cross-link" description="Glycyl lysine isopeptide (Lys-Gly) (interchain with G-Cter in SUMO2)" evidence="2">
    <location>
        <position position="305"/>
    </location>
</feature>
<feature type="cross-link" description="Glycyl lysine isopeptide (Lys-Gly) (interchain with G-Cter in SUMO2)" evidence="2">
    <location>
        <position position="364"/>
    </location>
</feature>
<feature type="cross-link" description="Glycyl lysine isopeptide (Lys-Gly) (interchain with G-Cter in SUMO2)" evidence="2">
    <location>
        <position position="408"/>
    </location>
</feature>
<feature type="non-terminal residue">
    <location>
        <position position="1"/>
    </location>
</feature>
<reference key="1">
    <citation type="journal article" date="1994" name="J. Biol. Chem.">
        <title>Two distinct class A helix-loop-helix transcription factors, E2A and BETA1, form separate DNA binding complexes on the insulin gene E box.</title>
        <authorList>
            <person name="Peyton M."/>
            <person name="Moss L.G."/>
            <person name="Tsai M.-J."/>
        </authorList>
    </citation>
    <scope>NUCLEOTIDE SEQUENCE [MRNA]</scope>
    <source>
        <tissue>Insulinoma</tissue>
    </source>
</reference>
<evidence type="ECO:0000250" key="1">
    <source>
        <dbReference type="UniProtKB" id="Q61286"/>
    </source>
</evidence>
<evidence type="ECO:0000250" key="2">
    <source>
        <dbReference type="UniProtKB" id="Q99081"/>
    </source>
</evidence>
<evidence type="ECO:0000255" key="3">
    <source>
        <dbReference type="PROSITE-ProRule" id="PRU00981"/>
    </source>
</evidence>
<evidence type="ECO:0000256" key="4">
    <source>
        <dbReference type="SAM" id="MobiDB-lite"/>
    </source>
</evidence>
<evidence type="ECO:0000305" key="5"/>
<protein>
    <recommendedName>
        <fullName>Transcription factor 12</fullName>
        <shortName>TCF-12</shortName>
    </recommendedName>
    <alternativeName>
        <fullName>Beta-cell E-box transcriptional activator 1</fullName>
        <shortName>BETA1</shortName>
    </alternativeName>
    <alternativeName>
        <fullName>DNA-binding protein HTF4</fullName>
    </alternativeName>
    <alternativeName>
        <fullName>E-box-binding protein</fullName>
    </alternativeName>
    <alternativeName>
        <fullName>Transcription factor HTF-4</fullName>
    </alternativeName>
</protein>
<accession>Q60420</accession>
<keyword id="KW-0217">Developmental protein</keyword>
<keyword id="KW-0221">Differentiation</keyword>
<keyword id="KW-0238">DNA-binding</keyword>
<keyword id="KW-1017">Isopeptide bond</keyword>
<keyword id="KW-0524">Neurogenesis</keyword>
<keyword id="KW-0539">Nucleus</keyword>
<keyword id="KW-0597">Phosphoprotein</keyword>
<keyword id="KW-1185">Reference proteome</keyword>
<keyword id="KW-0804">Transcription</keyword>
<keyword id="KW-0805">Transcription regulation</keyword>
<keyword id="KW-0832">Ubl conjugation</keyword>
<comment type="function">
    <text evidence="1 2">Transcriptional regulator. Involved in the initiation of neuronal differentiation. Activates transcription by binding to the E box (5'-CANNTG-3'). Participates in the control of inducible RP4 gene expression in salivary cells (By similarity). Binds to the RIPE3 element of the insulin II promoter (By similarity). May be involved in the functional network that regulates the development of the GnRH axis.</text>
</comment>
<comment type="subunit">
    <text evidence="1 2">Efficient DNA binding requires dimerization with another bHLH protein. Forms homo- or heterooligomers with myogenin, E12 and ITF2 proteins. Interacts with NEUROD2. Interacts with PTF1A. Interacts with RUNX1T1 (By similarity). Interacts with BHLHA9.</text>
</comment>
<comment type="subcellular location">
    <subcellularLocation>
        <location>Nucleus</location>
    </subcellularLocation>
</comment>
<comment type="sequence caution" evidence="5">
    <conflict type="frameshift">
        <sequence resource="EMBL-CDS" id="AAA65702"/>
    </conflict>
</comment>
<name>HTF4_MESAU</name>
<organism>
    <name type="scientific">Mesocricetus auratus</name>
    <name type="common">Golden hamster</name>
    <dbReference type="NCBI Taxonomy" id="10036"/>
    <lineage>
        <taxon>Eukaryota</taxon>
        <taxon>Metazoa</taxon>
        <taxon>Chordata</taxon>
        <taxon>Craniata</taxon>
        <taxon>Vertebrata</taxon>
        <taxon>Euteleostomi</taxon>
        <taxon>Mammalia</taxon>
        <taxon>Eutheria</taxon>
        <taxon>Euarchontoglires</taxon>
        <taxon>Glires</taxon>
        <taxon>Rodentia</taxon>
        <taxon>Myomorpha</taxon>
        <taxon>Muroidea</taxon>
        <taxon>Cricetidae</taxon>
        <taxon>Cricetinae</taxon>
        <taxon>Mesocricetus</taxon>
    </lineage>
</organism>
<gene>
    <name type="primary">TCF12</name>
</gene>
<sequence length="437" mass="47426">EFHDRLSYPPHSVSPTDISTSLPPMSSFHRGSTSSSPYVAASHTPPINGSDSILGARGNAAGSSQTGDALGKALASIYSPDHTSSSFPSNPSTPVGSPSPLTGTSQWPRAGGQAPSSPSYENSLHSLKNRVEQQLHEHLQDAMSFLKDVCEQSRMEDRLDRLDDAIHVLRNHAVGPSTSLPTSHSDIHSLLGPSHNAPIGNLNSNYGGSSLVTNSRSASMVGTHREDSVNLNGNHSVLSSTVAASNTDLNHKTPENYRGGLQNQSGNVVPTEIKTENKEKDENLHEPPSSDDMKSDDESSQKDIKVSSRGRTSSTNEDEDLNPEQKIEREKERRMANNARERLRVRDINEAFKELGRMCQLHLKSEKPQTKLLILHQAVAVILSLEQQVRERNLNPKAACLKRREEEKVSAASAEPPTTLPGTHPGLSETTNPMGHL</sequence>